<feature type="chain" id="PRO_0000377569" description="Vacuolar ATPase assembly integral membrane protein vma21">
    <location>
        <begin position="1"/>
        <end position="104"/>
    </location>
</feature>
<feature type="topological domain" description="Cytoplasmic" evidence="1">
    <location>
        <begin position="1"/>
        <end position="28"/>
    </location>
</feature>
<feature type="transmembrane region" description="Helical" evidence="1">
    <location>
        <begin position="29"/>
        <end position="49"/>
    </location>
</feature>
<feature type="topological domain" description="Lumenal" evidence="1">
    <location>
        <begin position="50"/>
        <end position="68"/>
    </location>
</feature>
<feature type="transmembrane region" description="Helical" evidence="1">
    <location>
        <begin position="69"/>
        <end position="89"/>
    </location>
</feature>
<feature type="topological domain" description="Cytoplasmic" evidence="1">
    <location>
        <begin position="90"/>
        <end position="104"/>
    </location>
</feature>
<feature type="region of interest" description="Disordered" evidence="2">
    <location>
        <begin position="1"/>
        <end position="21"/>
    </location>
</feature>
<reference key="1">
    <citation type="journal article" date="2013" name="Nature">
        <title>The zebrafish reference genome sequence and its relationship to the human genome.</title>
        <authorList>
            <person name="Howe K."/>
            <person name="Clark M.D."/>
            <person name="Torroja C.F."/>
            <person name="Torrance J."/>
            <person name="Berthelot C."/>
            <person name="Muffato M."/>
            <person name="Collins J.E."/>
            <person name="Humphray S."/>
            <person name="McLaren K."/>
            <person name="Matthews L."/>
            <person name="McLaren S."/>
            <person name="Sealy I."/>
            <person name="Caccamo M."/>
            <person name="Churcher C."/>
            <person name="Scott C."/>
            <person name="Barrett J.C."/>
            <person name="Koch R."/>
            <person name="Rauch G.J."/>
            <person name="White S."/>
            <person name="Chow W."/>
            <person name="Kilian B."/>
            <person name="Quintais L.T."/>
            <person name="Guerra-Assuncao J.A."/>
            <person name="Zhou Y."/>
            <person name="Gu Y."/>
            <person name="Yen J."/>
            <person name="Vogel J.H."/>
            <person name="Eyre T."/>
            <person name="Redmond S."/>
            <person name="Banerjee R."/>
            <person name="Chi J."/>
            <person name="Fu B."/>
            <person name="Langley E."/>
            <person name="Maguire S.F."/>
            <person name="Laird G.K."/>
            <person name="Lloyd D."/>
            <person name="Kenyon E."/>
            <person name="Donaldson S."/>
            <person name="Sehra H."/>
            <person name="Almeida-King J."/>
            <person name="Loveland J."/>
            <person name="Trevanion S."/>
            <person name="Jones M."/>
            <person name="Quail M."/>
            <person name="Willey D."/>
            <person name="Hunt A."/>
            <person name="Burton J."/>
            <person name="Sims S."/>
            <person name="McLay K."/>
            <person name="Plumb B."/>
            <person name="Davis J."/>
            <person name="Clee C."/>
            <person name="Oliver K."/>
            <person name="Clark R."/>
            <person name="Riddle C."/>
            <person name="Elliot D."/>
            <person name="Threadgold G."/>
            <person name="Harden G."/>
            <person name="Ware D."/>
            <person name="Begum S."/>
            <person name="Mortimore B."/>
            <person name="Kerry G."/>
            <person name="Heath P."/>
            <person name="Phillimore B."/>
            <person name="Tracey A."/>
            <person name="Corby N."/>
            <person name="Dunn M."/>
            <person name="Johnson C."/>
            <person name="Wood J."/>
            <person name="Clark S."/>
            <person name="Pelan S."/>
            <person name="Griffiths G."/>
            <person name="Smith M."/>
            <person name="Glithero R."/>
            <person name="Howden P."/>
            <person name="Barker N."/>
            <person name="Lloyd C."/>
            <person name="Stevens C."/>
            <person name="Harley J."/>
            <person name="Holt K."/>
            <person name="Panagiotidis G."/>
            <person name="Lovell J."/>
            <person name="Beasley H."/>
            <person name="Henderson C."/>
            <person name="Gordon D."/>
            <person name="Auger K."/>
            <person name="Wright D."/>
            <person name="Collins J."/>
            <person name="Raisen C."/>
            <person name="Dyer L."/>
            <person name="Leung K."/>
            <person name="Robertson L."/>
            <person name="Ambridge K."/>
            <person name="Leongamornlert D."/>
            <person name="McGuire S."/>
            <person name="Gilderthorp R."/>
            <person name="Griffiths C."/>
            <person name="Manthravadi D."/>
            <person name="Nichol S."/>
            <person name="Barker G."/>
            <person name="Whitehead S."/>
            <person name="Kay M."/>
            <person name="Brown J."/>
            <person name="Murnane C."/>
            <person name="Gray E."/>
            <person name="Humphries M."/>
            <person name="Sycamore N."/>
            <person name="Barker D."/>
            <person name="Saunders D."/>
            <person name="Wallis J."/>
            <person name="Babbage A."/>
            <person name="Hammond S."/>
            <person name="Mashreghi-Mohammadi M."/>
            <person name="Barr L."/>
            <person name="Martin S."/>
            <person name="Wray P."/>
            <person name="Ellington A."/>
            <person name="Matthews N."/>
            <person name="Ellwood M."/>
            <person name="Woodmansey R."/>
            <person name="Clark G."/>
            <person name="Cooper J."/>
            <person name="Tromans A."/>
            <person name="Grafham D."/>
            <person name="Skuce C."/>
            <person name="Pandian R."/>
            <person name="Andrews R."/>
            <person name="Harrison E."/>
            <person name="Kimberley A."/>
            <person name="Garnett J."/>
            <person name="Fosker N."/>
            <person name="Hall R."/>
            <person name="Garner P."/>
            <person name="Kelly D."/>
            <person name="Bird C."/>
            <person name="Palmer S."/>
            <person name="Gehring I."/>
            <person name="Berger A."/>
            <person name="Dooley C.M."/>
            <person name="Ersan-Urun Z."/>
            <person name="Eser C."/>
            <person name="Geiger H."/>
            <person name="Geisler M."/>
            <person name="Karotki L."/>
            <person name="Kirn A."/>
            <person name="Konantz J."/>
            <person name="Konantz M."/>
            <person name="Oberlander M."/>
            <person name="Rudolph-Geiger S."/>
            <person name="Teucke M."/>
            <person name="Lanz C."/>
            <person name="Raddatz G."/>
            <person name="Osoegawa K."/>
            <person name="Zhu B."/>
            <person name="Rapp A."/>
            <person name="Widaa S."/>
            <person name="Langford C."/>
            <person name="Yang F."/>
            <person name="Schuster S.C."/>
            <person name="Carter N.P."/>
            <person name="Harrow J."/>
            <person name="Ning Z."/>
            <person name="Herrero J."/>
            <person name="Searle S.M."/>
            <person name="Enright A."/>
            <person name="Geisler R."/>
            <person name="Plasterk R.H."/>
            <person name="Lee C."/>
            <person name="Westerfield M."/>
            <person name="de Jong P.J."/>
            <person name="Zon L.I."/>
            <person name="Postlethwait J.H."/>
            <person name="Nusslein-Volhard C."/>
            <person name="Hubbard T.J."/>
            <person name="Roest Crollius H."/>
            <person name="Rogers J."/>
            <person name="Stemple D.L."/>
        </authorList>
    </citation>
    <scope>NUCLEOTIDE SEQUENCE [LARGE SCALE GENOMIC DNA]</scope>
    <source>
        <strain>Tuebingen</strain>
    </source>
</reference>
<dbReference type="EMBL" id="CU570786">
    <property type="protein sequence ID" value="CAX14574.1"/>
    <property type="molecule type" value="Genomic_DNA"/>
</dbReference>
<dbReference type="RefSeq" id="NP_001189353.1">
    <property type="nucleotide sequence ID" value="NM_001202424.1"/>
</dbReference>
<dbReference type="SMR" id="B8JLV7"/>
<dbReference type="FunCoup" id="B8JLV7">
    <property type="interactions" value="491"/>
</dbReference>
<dbReference type="STRING" id="7955.ENSDARP00000117667"/>
<dbReference type="PaxDb" id="7955-ENSDARP00000117667"/>
<dbReference type="PeptideAtlas" id="B8JLV7"/>
<dbReference type="Ensembl" id="ENSDART00000142112">
    <property type="protein sequence ID" value="ENSDARP00000117667"/>
    <property type="gene ID" value="ENSDARG00000093945"/>
</dbReference>
<dbReference type="GeneID" id="100307085"/>
<dbReference type="KEGG" id="dre:100307085"/>
<dbReference type="AGR" id="ZFIN:ZDB-GENE-081104-272"/>
<dbReference type="CTD" id="203547"/>
<dbReference type="ZFIN" id="ZDB-GENE-081104-272">
    <property type="gene designation" value="vma21"/>
</dbReference>
<dbReference type="eggNOG" id="KOG4783">
    <property type="taxonomic scope" value="Eukaryota"/>
</dbReference>
<dbReference type="HOGENOM" id="CLU_143588_1_0_1"/>
<dbReference type="InParanoid" id="B8JLV7"/>
<dbReference type="OMA" id="FFEMSKL"/>
<dbReference type="PhylomeDB" id="B8JLV7"/>
<dbReference type="TreeFam" id="TF314021"/>
<dbReference type="PRO" id="PR:B8JLV7"/>
<dbReference type="Proteomes" id="UP000000437">
    <property type="component" value="Alternate scaffold 5"/>
</dbReference>
<dbReference type="Proteomes" id="UP000000437">
    <property type="component" value="Chromosome 5"/>
</dbReference>
<dbReference type="Bgee" id="ENSDARG00000093945">
    <property type="expression patterns" value="Expressed in brain and 25 other cell types or tissues"/>
</dbReference>
<dbReference type="GO" id="GO:0005789">
    <property type="term" value="C:endoplasmic reticulum membrane"/>
    <property type="evidence" value="ECO:0000318"/>
    <property type="project" value="GO_Central"/>
</dbReference>
<dbReference type="GO" id="GO:0033116">
    <property type="term" value="C:endoplasmic reticulum-Golgi intermediate compartment membrane"/>
    <property type="evidence" value="ECO:0007669"/>
    <property type="project" value="UniProtKB-SubCell"/>
</dbReference>
<dbReference type="GO" id="GO:0012507">
    <property type="term" value="C:ER to Golgi transport vesicle membrane"/>
    <property type="evidence" value="ECO:0007669"/>
    <property type="project" value="UniProtKB-SubCell"/>
</dbReference>
<dbReference type="GO" id="GO:0070072">
    <property type="term" value="P:vacuolar proton-transporting V-type ATPase complex assembly"/>
    <property type="evidence" value="ECO:0000318"/>
    <property type="project" value="GO_Central"/>
</dbReference>
<dbReference type="HAMAP" id="MF_03058">
    <property type="entry name" value="VMA21"/>
    <property type="match status" value="1"/>
</dbReference>
<dbReference type="InterPro" id="IPR019013">
    <property type="entry name" value="Vma21"/>
</dbReference>
<dbReference type="PANTHER" id="PTHR31792">
    <property type="entry name" value="VACUOLAR ATPASE ASSEMBLY INTEGRAL MEMBRANE PROTEIN VMA21"/>
    <property type="match status" value="1"/>
</dbReference>
<dbReference type="PANTHER" id="PTHR31792:SF3">
    <property type="entry name" value="VACUOLAR ATPASE ASSEMBLY INTEGRAL MEMBRANE PROTEIN VMA21"/>
    <property type="match status" value="1"/>
</dbReference>
<dbReference type="Pfam" id="PF09446">
    <property type="entry name" value="VMA21"/>
    <property type="match status" value="1"/>
</dbReference>
<evidence type="ECO:0000255" key="1">
    <source>
        <dbReference type="HAMAP-Rule" id="MF_03058"/>
    </source>
</evidence>
<evidence type="ECO:0000256" key="2">
    <source>
        <dbReference type="SAM" id="MobiDB-lite"/>
    </source>
</evidence>
<protein>
    <recommendedName>
        <fullName evidence="1">Vacuolar ATPase assembly integral membrane protein vma21</fullName>
    </recommendedName>
</protein>
<organism>
    <name type="scientific">Danio rerio</name>
    <name type="common">Zebrafish</name>
    <name type="synonym">Brachydanio rerio</name>
    <dbReference type="NCBI Taxonomy" id="7955"/>
    <lineage>
        <taxon>Eukaryota</taxon>
        <taxon>Metazoa</taxon>
        <taxon>Chordata</taxon>
        <taxon>Craniata</taxon>
        <taxon>Vertebrata</taxon>
        <taxon>Euteleostomi</taxon>
        <taxon>Actinopterygii</taxon>
        <taxon>Neopterygii</taxon>
        <taxon>Teleostei</taxon>
        <taxon>Ostariophysi</taxon>
        <taxon>Cypriniformes</taxon>
        <taxon>Danionidae</taxon>
        <taxon>Danioninae</taxon>
        <taxon>Danio</taxon>
    </lineage>
</organism>
<keyword id="KW-0968">Cytoplasmic vesicle</keyword>
<keyword id="KW-0256">Endoplasmic reticulum</keyword>
<keyword id="KW-0472">Membrane</keyword>
<keyword id="KW-1185">Reference proteome</keyword>
<keyword id="KW-0812">Transmembrane</keyword>
<keyword id="KW-1133">Transmembrane helix</keyword>
<proteinExistence type="inferred from homology"/>
<comment type="function">
    <text evidence="1">Required for the assembly of the V0 complex of the vacuolar ATPase (V-ATPase) in the endoplasmic reticulum.</text>
</comment>
<comment type="subcellular location">
    <subcellularLocation>
        <location evidence="1">Endoplasmic reticulum membrane</location>
        <topology evidence="1">Multi-pass membrane protein</topology>
    </subcellularLocation>
    <subcellularLocation>
        <location evidence="1">Endoplasmic reticulum-Golgi intermediate compartment membrane</location>
        <topology evidence="1">Multi-pass membrane protein</topology>
    </subcellularLocation>
    <subcellularLocation>
        <location evidence="1">Cytoplasmic vesicle</location>
        <location evidence="1">COPII-coated vesicle membrane</location>
        <topology evidence="1">Multi-pass membrane protein</topology>
    </subcellularLocation>
</comment>
<comment type="similarity">
    <text evidence="1">Belongs to the VMA21 family.</text>
</comment>
<gene>
    <name type="primary">vma21</name>
    <name type="ORF">si:ch73-26o5.1</name>
</gene>
<sequence>MQNYDKKEVGSVPGAMPDFRGNDGSLVSVLKTLLFFTILMITLPIGLYFTSKSLLFEATLGYSSNDSYFYAAILAVLAVHVVLALFVYVAWNEGSRQWREGKQD</sequence>
<name>VMA21_DANRE</name>
<accession>B8JLV7</accession>